<name>AUNA_ASPNA</name>
<dbReference type="EMBL" id="ACJE01000004">
    <property type="protein sequence ID" value="EHA27203.1"/>
    <property type="molecule type" value="Genomic_DNA"/>
</dbReference>
<dbReference type="GlyCosmos" id="G3XSI2">
    <property type="glycosylation" value="8 sites, No reported glycans"/>
</dbReference>
<dbReference type="VEuPathDB" id="FungiDB:ASPNIDRAFT2_1162950"/>
<dbReference type="HOGENOM" id="CLU_072152_0_0_1"/>
<dbReference type="OrthoDB" id="6609at5052"/>
<dbReference type="Proteomes" id="UP000009038">
    <property type="component" value="Unassembled WGS sequence"/>
</dbReference>
<keyword id="KW-0325">Glycoprotein</keyword>
<keyword id="KW-0732">Signal</keyword>
<comment type="function">
    <text evidence="3 6">Part of the gene cluster that mediates the biosynthesis of aurasperone B, a dimeric gamma-naphthopyrone (PubMed:31067027). The first step in the biosynthesis of aurasperone B is the production of gamma-naphthopyrone precursor YWA1 by the non-reducing polyketide synthase albA, via condensation of one acetyl-CoA starter unit with 6 malonyl-CoA units (PubMed:31067027). YWA1 is then methylated by aunE at position C-6 to yield foncesin which is further methylated at position C-8 by aunD to produce fonsecin B (Probable). A key enzyme in the biosynthetic pathway is the cytochrome P450 monooxygenase aunB which catalyzes the oxidative dimerization of fonsecin B to aurasperone B (PubMed:31067027). AunB also catalyzes the oxidative dimerization of rubrofusarin B into aurasperone A (PubMed:31067027).</text>
</comment>
<comment type="similarity">
    <text evidence="5">Belongs to the bfoA family.</text>
</comment>
<accession>G3XSI2</accession>
<evidence type="ECO:0000255" key="1"/>
<evidence type="ECO:0000255" key="2">
    <source>
        <dbReference type="PROSITE-ProRule" id="PRU00498"/>
    </source>
</evidence>
<evidence type="ECO:0000269" key="3">
    <source>
    </source>
</evidence>
<evidence type="ECO:0000303" key="4">
    <source>
    </source>
</evidence>
<evidence type="ECO:0000305" key="5"/>
<evidence type="ECO:0000305" key="6">
    <source>
    </source>
</evidence>
<evidence type="ECO:0000312" key="7">
    <source>
        <dbReference type="EMBL" id="EHA27203.1"/>
    </source>
</evidence>
<reference key="1">
    <citation type="journal article" date="2011" name="Genome Res.">
        <title>Comparative genomics of citric-acid-producing Aspergillus niger ATCC 1015 versus enzyme-producing CBS 513.88.</title>
        <authorList>
            <person name="Andersen M.R."/>
            <person name="Salazar M.P."/>
            <person name="Schaap P.J."/>
            <person name="van de Vondervoort P.J.I."/>
            <person name="Culley D."/>
            <person name="Thykaer J."/>
            <person name="Frisvad J.C."/>
            <person name="Nielsen K.F."/>
            <person name="Albang R."/>
            <person name="Albermann K."/>
            <person name="Berka R.M."/>
            <person name="Braus G.H."/>
            <person name="Braus-Stromeyer S.A."/>
            <person name="Corrochano L.M."/>
            <person name="Dai Z."/>
            <person name="van Dijck P.W.M."/>
            <person name="Hofmann G."/>
            <person name="Lasure L.L."/>
            <person name="Magnuson J.K."/>
            <person name="Menke H."/>
            <person name="Meijer M."/>
            <person name="Meijer S.L."/>
            <person name="Nielsen J.B."/>
            <person name="Nielsen M.L."/>
            <person name="van Ooyen A.J.J."/>
            <person name="Pel H.J."/>
            <person name="Poulsen L."/>
            <person name="Samson R.A."/>
            <person name="Stam H."/>
            <person name="Tsang A."/>
            <person name="van den Brink J.M."/>
            <person name="Atkins A."/>
            <person name="Aerts A."/>
            <person name="Shapiro H."/>
            <person name="Pangilinan J."/>
            <person name="Salamov A."/>
            <person name="Lou Y."/>
            <person name="Lindquist E."/>
            <person name="Lucas S."/>
            <person name="Grimwood J."/>
            <person name="Grigoriev I.V."/>
            <person name="Kubicek C.P."/>
            <person name="Martinez D."/>
            <person name="van Peij N.N.M.E."/>
            <person name="Roubos J.A."/>
            <person name="Nielsen J."/>
            <person name="Baker S.E."/>
        </authorList>
    </citation>
    <scope>NUCLEOTIDE SEQUENCE [LARGE SCALE GENOMIC DNA]</scope>
    <source>
        <strain>ATCC 1015 / CBS 113.46 / FGSC A1144 / LSHB Ac4 / NCTC 3858a / NRRL 328 / USDA 3528.7</strain>
    </source>
</reference>
<reference key="2">
    <citation type="journal article" date="2019" name="Biochemistry">
        <title>Biaryl-forming enzymes from Aspergilli exhibit substrate-dependent stereoselectivity.</title>
        <authorList>
            <person name="Obermaier S."/>
            <person name="Mueller M."/>
        </authorList>
    </citation>
    <scope>FUNCTION</scope>
    <scope>PATHWAY</scope>
</reference>
<protein>
    <recommendedName>
        <fullName evidence="4">Aurasperone B biosynthesis cluster protein A</fullName>
    </recommendedName>
</protein>
<organism>
    <name type="scientific">Aspergillus niger (strain ATCC 1015 / CBS 113.46 / FGSC A1144 / LSHB Ac4 / NCTC 3858a / NRRL 328 / USDA 3528.7)</name>
    <dbReference type="NCBI Taxonomy" id="380704"/>
    <lineage>
        <taxon>Eukaryota</taxon>
        <taxon>Fungi</taxon>
        <taxon>Dikarya</taxon>
        <taxon>Ascomycota</taxon>
        <taxon>Pezizomycotina</taxon>
        <taxon>Eurotiomycetes</taxon>
        <taxon>Eurotiomycetidae</taxon>
        <taxon>Eurotiales</taxon>
        <taxon>Aspergillaceae</taxon>
        <taxon>Aspergillus</taxon>
        <taxon>Aspergillus subgen. Circumdati</taxon>
    </lineage>
</organism>
<gene>
    <name evidence="4" type="primary">aunA</name>
    <name evidence="7" type="ORF">ASPNIDRAFT_35374</name>
</gene>
<feature type="signal peptide" evidence="1">
    <location>
        <begin position="1"/>
        <end position="26"/>
    </location>
</feature>
<feature type="chain" id="PRO_5003460058" description="Aurasperone B biosynthesis cluster protein A">
    <location>
        <begin position="27"/>
        <end position="305"/>
    </location>
</feature>
<feature type="glycosylation site" description="N-linked (GlcNAc...) asparagine" evidence="2">
    <location>
        <position position="29"/>
    </location>
</feature>
<feature type="glycosylation site" description="N-linked (GlcNAc...) asparagine" evidence="2">
    <location>
        <position position="34"/>
    </location>
</feature>
<feature type="glycosylation site" description="N-linked (GlcNAc...) asparagine" evidence="2">
    <location>
        <position position="64"/>
    </location>
</feature>
<feature type="glycosylation site" description="N-linked (GlcNAc...) asparagine" evidence="2">
    <location>
        <position position="83"/>
    </location>
</feature>
<feature type="glycosylation site" description="N-linked (GlcNAc...) asparagine" evidence="2">
    <location>
        <position position="132"/>
    </location>
</feature>
<feature type="glycosylation site" description="N-linked (GlcNAc...) asparagine" evidence="2">
    <location>
        <position position="183"/>
    </location>
</feature>
<feature type="glycosylation site" description="N-linked (GlcNAc...) asparagine" evidence="2">
    <location>
        <position position="218"/>
    </location>
</feature>
<feature type="glycosylation site" description="N-linked (GlcNAc...) asparagine" evidence="2">
    <location>
        <position position="288"/>
    </location>
</feature>
<proteinExistence type="inferred from homology"/>
<sequence>MSIFFSIRFWPAAISAAILWLPQVLGRSNGTAPNYTVEELWKLETTFWDNFLYPANVEQMEAINSTLFTQDVQGRVDITRVFNGSELNTEYIFGLFSDPDHVSLVGVPVDYSITQFIAQGNIASATTVVTFNATSFGNLLVPVTIDTWIMWDADGRIMQYDATFRWFGFLLDTLVEALAESINGTTSQATASLTQLLATTICATHDQYCTGANQQYDNNTACLDFLTSAIPLGKDYELGRNTLLCREVHEHMVQYDPALHCPHIGPTGGDYCVDDQTYAQKVLQKYFNQSWIVGVPSTGDIWLGD</sequence>